<proteinExistence type="inferred from homology"/>
<accession>Q57I17</accession>
<sequence>MIKQPALAQEQYACVYAWLALLFFREVDDEGLIQLQSAEIADWLALLKRQPALAASVALLEQKIAALSLRQDAQLELAADFCGLFLMTDKKSALPYASQYPQQEPGMIKHLLLEAGMEVNDDFKEPADHLAIYLELLSHLHFSLGESFQQRRMNKLRQKTLSSLLEWLPEFTNNCLKHDPYGFYAALSQLLLAIVRFDDGKEDLSIVAAE</sequence>
<protein>
    <recommendedName>
        <fullName evidence="1">Chaperone protein TorD</fullName>
    </recommendedName>
</protein>
<reference key="1">
    <citation type="journal article" date="2005" name="Nucleic Acids Res.">
        <title>The genome sequence of Salmonella enterica serovar Choleraesuis, a highly invasive and resistant zoonotic pathogen.</title>
        <authorList>
            <person name="Chiu C.-H."/>
            <person name="Tang P."/>
            <person name="Chu C."/>
            <person name="Hu S."/>
            <person name="Bao Q."/>
            <person name="Yu J."/>
            <person name="Chou Y.-Y."/>
            <person name="Wang H.-S."/>
            <person name="Lee Y.-S."/>
        </authorList>
    </citation>
    <scope>NUCLEOTIDE SEQUENCE [LARGE SCALE GENOMIC DNA]</scope>
    <source>
        <strain>SC-B67</strain>
    </source>
</reference>
<comment type="function">
    <text evidence="1">Involved in the biogenesis of TorA. Acts on TorA before the insertion of the molybdenum cofactor and, as a result, probably favors a conformation of the apoenzyme that is competent for acquiring the cofactor.</text>
</comment>
<comment type="subcellular location">
    <subcellularLocation>
        <location evidence="1">Cytoplasm</location>
    </subcellularLocation>
</comment>
<comment type="similarity">
    <text evidence="1">Belongs to the TorD/DmsD family. TorD subfamily.</text>
</comment>
<feature type="chain" id="PRO_1000065503" description="Chaperone protein TorD">
    <location>
        <begin position="1"/>
        <end position="210"/>
    </location>
</feature>
<evidence type="ECO:0000255" key="1">
    <source>
        <dbReference type="HAMAP-Rule" id="MF_01150"/>
    </source>
</evidence>
<name>TORD_SALCH</name>
<dbReference type="EMBL" id="AE017220">
    <property type="protein sequence ID" value="AAX67645.1"/>
    <property type="molecule type" value="Genomic_DNA"/>
</dbReference>
<dbReference type="RefSeq" id="WP_000595415.1">
    <property type="nucleotide sequence ID" value="NC_006905.1"/>
</dbReference>
<dbReference type="SMR" id="Q57I17"/>
<dbReference type="KEGG" id="sec:SCH_3739"/>
<dbReference type="HOGENOM" id="CLU_077650_4_0_6"/>
<dbReference type="Proteomes" id="UP000000538">
    <property type="component" value="Chromosome"/>
</dbReference>
<dbReference type="GO" id="GO:0005737">
    <property type="term" value="C:cytoplasm"/>
    <property type="evidence" value="ECO:0007669"/>
    <property type="project" value="UniProtKB-SubCell"/>
</dbReference>
<dbReference type="GO" id="GO:0051259">
    <property type="term" value="P:protein complex oligomerization"/>
    <property type="evidence" value="ECO:0007669"/>
    <property type="project" value="InterPro"/>
</dbReference>
<dbReference type="GO" id="GO:0006457">
    <property type="term" value="P:protein folding"/>
    <property type="evidence" value="ECO:0007669"/>
    <property type="project" value="UniProtKB-UniRule"/>
</dbReference>
<dbReference type="Gene3D" id="1.20.120.1820">
    <property type="match status" value="1"/>
</dbReference>
<dbReference type="Gene3D" id="1.20.1280.20">
    <property type="entry name" value="HscB, C-terminal domain"/>
    <property type="match status" value="1"/>
</dbReference>
<dbReference type="HAMAP" id="MF_01150">
    <property type="entry name" value="TorD"/>
    <property type="match status" value="1"/>
</dbReference>
<dbReference type="InterPro" id="IPR023069">
    <property type="entry name" value="Chaperone_TorD"/>
</dbReference>
<dbReference type="InterPro" id="IPR020945">
    <property type="entry name" value="DMSO/NO3_reduct_chaperone"/>
</dbReference>
<dbReference type="InterPro" id="IPR036386">
    <property type="entry name" value="HscB_C_sf"/>
</dbReference>
<dbReference type="InterPro" id="IPR036411">
    <property type="entry name" value="TorD-like_sf"/>
</dbReference>
<dbReference type="InterPro" id="IPR050289">
    <property type="entry name" value="TorD/DmsD_chaperones"/>
</dbReference>
<dbReference type="NCBIfam" id="NF003442">
    <property type="entry name" value="PRK04976.1"/>
    <property type="match status" value="1"/>
</dbReference>
<dbReference type="PANTHER" id="PTHR34227:SF11">
    <property type="entry name" value="CHAPERONE PROTEIN TORD"/>
    <property type="match status" value="1"/>
</dbReference>
<dbReference type="PANTHER" id="PTHR34227">
    <property type="entry name" value="CHAPERONE PROTEIN YCDY"/>
    <property type="match status" value="1"/>
</dbReference>
<dbReference type="Pfam" id="PF02613">
    <property type="entry name" value="Nitrate_red_del"/>
    <property type="match status" value="1"/>
</dbReference>
<dbReference type="SUPFAM" id="SSF89155">
    <property type="entry name" value="TorD-like"/>
    <property type="match status" value="1"/>
</dbReference>
<keyword id="KW-0143">Chaperone</keyword>
<keyword id="KW-0963">Cytoplasm</keyword>
<organism>
    <name type="scientific">Salmonella choleraesuis (strain SC-B67)</name>
    <dbReference type="NCBI Taxonomy" id="321314"/>
    <lineage>
        <taxon>Bacteria</taxon>
        <taxon>Pseudomonadati</taxon>
        <taxon>Pseudomonadota</taxon>
        <taxon>Gammaproteobacteria</taxon>
        <taxon>Enterobacterales</taxon>
        <taxon>Enterobacteriaceae</taxon>
        <taxon>Salmonella</taxon>
    </lineage>
</organism>
<gene>
    <name evidence="1" type="primary">torD</name>
    <name type="ordered locus">SCH_3739</name>
</gene>